<accession>P20706</accession>
<accession>Q96225</accession>
<gene>
    <name type="primary">y01I</name>
    <name type="synonym">mrh.1</name>
</gene>
<sequence length="113" mass="12621">MFIFNWFKSFFTDFFSTTPGEGVVPISNDYLPLTVVEYVYMGDGTVEAVTMTYEEAQEYYKNPWRWSTPTTSSNTQNTQSSSDSYDTNVPVHVWAGDSCGSSCDSSCSSTSCD</sequence>
<organismHost>
    <name type="scientific">Escherichia coli</name>
    <dbReference type="NCBI Taxonomy" id="562"/>
</organismHost>
<organism>
    <name type="scientific">Enterobacteria phage T4</name>
    <name type="common">Bacteriophage T4</name>
    <dbReference type="NCBI Taxonomy" id="10665"/>
    <lineage>
        <taxon>Viruses</taxon>
        <taxon>Duplodnaviria</taxon>
        <taxon>Heunggongvirae</taxon>
        <taxon>Uroviricota</taxon>
        <taxon>Caudoviricetes</taxon>
        <taxon>Straboviridae</taxon>
        <taxon>Tevenvirinae</taxon>
        <taxon>Tequatrovirus</taxon>
    </lineage>
</organism>
<protein>
    <recommendedName>
        <fullName>Uncharacterized 12.6 kDa protein in mrh-soc intergenic region</fullName>
    </recommendedName>
</protein>
<feature type="chain" id="PRO_0000165090" description="Uncharacterized 12.6 kDa protein in mrh-soc intergenic region">
    <location>
        <begin position="1"/>
        <end position="113"/>
    </location>
</feature>
<feature type="region of interest" description="Disordered" evidence="1">
    <location>
        <begin position="66"/>
        <end position="85"/>
    </location>
</feature>
<feature type="compositionally biased region" description="Low complexity" evidence="1">
    <location>
        <begin position="67"/>
        <end position="85"/>
    </location>
</feature>
<reference key="1">
    <citation type="journal article" date="1990" name="Gene">
        <title>The bacteriophage T4 gene mrh whose product inhibits late T4 gene expression in an Escherichia coli rpoH (sigma 32) mutant.</title>
        <authorList>
            <person name="Frazier M.W."/>
            <person name="Mosig G."/>
        </authorList>
    </citation>
    <scope>NUCLEOTIDE SEQUENCE [GENOMIC DNA]</scope>
</reference>
<reference key="2">
    <citation type="journal article" date="2003" name="Microbiol. Mol. Biol. Rev.">
        <title>Bacteriophage T4 genome.</title>
        <authorList>
            <person name="Miller E.S."/>
            <person name="Kutter E."/>
            <person name="Mosig G."/>
            <person name="Arisaka F."/>
            <person name="Kunisawa T."/>
            <person name="Ruger W."/>
        </authorList>
    </citation>
    <scope>NUCLEOTIDE SEQUENCE [LARGE SCALE GENOMIC DNA]</scope>
</reference>
<proteinExistence type="predicted"/>
<dbReference type="EMBL" id="M30001">
    <property type="protein sequence ID" value="AAB07795.1"/>
    <property type="molecule type" value="Genomic_DNA"/>
</dbReference>
<dbReference type="EMBL" id="AF158101">
    <property type="protein sequence ID" value="AAD42613.1"/>
    <property type="molecule type" value="Genomic_DNA"/>
</dbReference>
<dbReference type="PIR" id="T10136">
    <property type="entry name" value="T10136"/>
</dbReference>
<dbReference type="RefSeq" id="NP_049642.1">
    <property type="nucleotide sequence ID" value="NC_000866.4"/>
</dbReference>
<dbReference type="GeneID" id="1258720"/>
<dbReference type="KEGG" id="vg:1258720"/>
<dbReference type="OrthoDB" id="24929at10239"/>
<dbReference type="Proteomes" id="UP000009087">
    <property type="component" value="Segment"/>
</dbReference>
<dbReference type="InterPro" id="IPR055630">
    <property type="entry name" value="DUF7206"/>
</dbReference>
<dbReference type="Pfam" id="PF23836">
    <property type="entry name" value="DUF7206"/>
    <property type="match status" value="1"/>
</dbReference>
<keyword id="KW-1185">Reference proteome</keyword>
<evidence type="ECO:0000256" key="1">
    <source>
        <dbReference type="SAM" id="MobiDB-lite"/>
    </source>
</evidence>
<name>Y01I_BPT4</name>